<feature type="chain" id="PRO_1000184527" description="ATP synthase subunit c">
    <location>
        <begin position="1"/>
        <end position="89"/>
    </location>
</feature>
<feature type="transmembrane region" description="Helical" evidence="1">
    <location>
        <begin position="3"/>
        <end position="23"/>
    </location>
</feature>
<feature type="transmembrane region" description="Helical" evidence="1">
    <location>
        <begin position="53"/>
        <end position="73"/>
    </location>
</feature>
<feature type="site" description="Reversibly protonated during proton transport" evidence="1">
    <location>
        <position position="60"/>
    </location>
</feature>
<dbReference type="EMBL" id="CP000542">
    <property type="protein sequence ID" value="ABM56260.1"/>
    <property type="molecule type" value="Genomic_DNA"/>
</dbReference>
<dbReference type="RefSeq" id="WP_011808276.1">
    <property type="nucleotide sequence ID" value="NC_008786.1"/>
</dbReference>
<dbReference type="SMR" id="A1WF53"/>
<dbReference type="STRING" id="391735.Veis_0475"/>
<dbReference type="GeneID" id="76459185"/>
<dbReference type="KEGG" id="vei:Veis_0475"/>
<dbReference type="eggNOG" id="ENOG5032S3K">
    <property type="taxonomic scope" value="Bacteria"/>
</dbReference>
<dbReference type="HOGENOM" id="CLU_148047_1_0_4"/>
<dbReference type="OrthoDB" id="9811659at2"/>
<dbReference type="Proteomes" id="UP000000374">
    <property type="component" value="Chromosome"/>
</dbReference>
<dbReference type="GO" id="GO:0005886">
    <property type="term" value="C:plasma membrane"/>
    <property type="evidence" value="ECO:0007669"/>
    <property type="project" value="UniProtKB-SubCell"/>
</dbReference>
<dbReference type="GO" id="GO:0045259">
    <property type="term" value="C:proton-transporting ATP synthase complex"/>
    <property type="evidence" value="ECO:0007669"/>
    <property type="project" value="UniProtKB-KW"/>
</dbReference>
<dbReference type="GO" id="GO:0033177">
    <property type="term" value="C:proton-transporting two-sector ATPase complex, proton-transporting domain"/>
    <property type="evidence" value="ECO:0007669"/>
    <property type="project" value="InterPro"/>
</dbReference>
<dbReference type="GO" id="GO:0008289">
    <property type="term" value="F:lipid binding"/>
    <property type="evidence" value="ECO:0007669"/>
    <property type="project" value="UniProtKB-KW"/>
</dbReference>
<dbReference type="GO" id="GO:0046933">
    <property type="term" value="F:proton-transporting ATP synthase activity, rotational mechanism"/>
    <property type="evidence" value="ECO:0007669"/>
    <property type="project" value="UniProtKB-UniRule"/>
</dbReference>
<dbReference type="CDD" id="cd18185">
    <property type="entry name" value="ATP-synt_Fo_c_ATPE"/>
    <property type="match status" value="1"/>
</dbReference>
<dbReference type="FunFam" id="1.20.20.10:FF:000002">
    <property type="entry name" value="ATP synthase subunit c"/>
    <property type="match status" value="1"/>
</dbReference>
<dbReference type="Gene3D" id="1.20.20.10">
    <property type="entry name" value="F1F0 ATP synthase subunit C"/>
    <property type="match status" value="1"/>
</dbReference>
<dbReference type="HAMAP" id="MF_01396">
    <property type="entry name" value="ATP_synth_c_bact"/>
    <property type="match status" value="1"/>
</dbReference>
<dbReference type="InterPro" id="IPR005953">
    <property type="entry name" value="ATP_synth_csu_bac/chlpt"/>
</dbReference>
<dbReference type="InterPro" id="IPR000454">
    <property type="entry name" value="ATP_synth_F0_csu"/>
</dbReference>
<dbReference type="InterPro" id="IPR020537">
    <property type="entry name" value="ATP_synth_F0_csu_DDCD_BS"/>
</dbReference>
<dbReference type="InterPro" id="IPR038662">
    <property type="entry name" value="ATP_synth_F0_csu_sf"/>
</dbReference>
<dbReference type="InterPro" id="IPR002379">
    <property type="entry name" value="ATPase_proteolipid_c-like_dom"/>
</dbReference>
<dbReference type="InterPro" id="IPR035921">
    <property type="entry name" value="F/V-ATP_Csub_sf"/>
</dbReference>
<dbReference type="NCBIfam" id="TIGR01260">
    <property type="entry name" value="ATP_synt_c"/>
    <property type="match status" value="1"/>
</dbReference>
<dbReference type="NCBIfam" id="NF005363">
    <property type="entry name" value="PRK06876.1"/>
    <property type="match status" value="1"/>
</dbReference>
<dbReference type="Pfam" id="PF00137">
    <property type="entry name" value="ATP-synt_C"/>
    <property type="match status" value="1"/>
</dbReference>
<dbReference type="PRINTS" id="PR00124">
    <property type="entry name" value="ATPASEC"/>
</dbReference>
<dbReference type="SUPFAM" id="SSF81333">
    <property type="entry name" value="F1F0 ATP synthase subunit C"/>
    <property type="match status" value="1"/>
</dbReference>
<dbReference type="PROSITE" id="PS00605">
    <property type="entry name" value="ATPASE_C"/>
    <property type="match status" value="1"/>
</dbReference>
<evidence type="ECO:0000255" key="1">
    <source>
        <dbReference type="HAMAP-Rule" id="MF_01396"/>
    </source>
</evidence>
<sequence length="89" mass="9197">MEIILGFVALACGLIVGLGAIGASIGIGLMGGKFLESSARQPELINELQTKMFILAGLIDAAFLIGVAIALMFAFANPFVSTLLANMPK</sequence>
<reference key="1">
    <citation type="submission" date="2006-12" db="EMBL/GenBank/DDBJ databases">
        <title>Complete sequence of chromosome 1 of Verminephrobacter eiseniae EF01-2.</title>
        <authorList>
            <person name="Copeland A."/>
            <person name="Lucas S."/>
            <person name="Lapidus A."/>
            <person name="Barry K."/>
            <person name="Detter J.C."/>
            <person name="Glavina del Rio T."/>
            <person name="Dalin E."/>
            <person name="Tice H."/>
            <person name="Pitluck S."/>
            <person name="Chertkov O."/>
            <person name="Brettin T."/>
            <person name="Bruce D."/>
            <person name="Han C."/>
            <person name="Tapia R."/>
            <person name="Gilna P."/>
            <person name="Schmutz J."/>
            <person name="Larimer F."/>
            <person name="Land M."/>
            <person name="Hauser L."/>
            <person name="Kyrpides N."/>
            <person name="Kim E."/>
            <person name="Stahl D."/>
            <person name="Richardson P."/>
        </authorList>
    </citation>
    <scope>NUCLEOTIDE SEQUENCE [LARGE SCALE GENOMIC DNA]</scope>
    <source>
        <strain>EF01-2</strain>
    </source>
</reference>
<proteinExistence type="inferred from homology"/>
<gene>
    <name evidence="1" type="primary">atpE</name>
    <name type="ordered locus">Veis_0475</name>
</gene>
<comment type="function">
    <text evidence="1">F(1)F(0) ATP synthase produces ATP from ADP in the presence of a proton or sodium gradient. F-type ATPases consist of two structural domains, F(1) containing the extramembraneous catalytic core and F(0) containing the membrane proton channel, linked together by a central stalk and a peripheral stalk. During catalysis, ATP synthesis in the catalytic domain of F(1) is coupled via a rotary mechanism of the central stalk subunits to proton translocation.</text>
</comment>
<comment type="function">
    <text evidence="1">Key component of the F(0) channel; it plays a direct role in translocation across the membrane. A homomeric c-ring of between 10-14 subunits forms the central stalk rotor element with the F(1) delta and epsilon subunits.</text>
</comment>
<comment type="subunit">
    <text evidence="1">F-type ATPases have 2 components, F(1) - the catalytic core - and F(0) - the membrane proton channel. F(1) has five subunits: alpha(3), beta(3), gamma(1), delta(1), epsilon(1). F(0) has three main subunits: a(1), b(2) and c(10-14). The alpha and beta chains form an alternating ring which encloses part of the gamma chain. F(1) is attached to F(0) by a central stalk formed by the gamma and epsilon chains, while a peripheral stalk is formed by the delta and b chains.</text>
</comment>
<comment type="subcellular location">
    <subcellularLocation>
        <location evidence="1">Cell inner membrane</location>
        <topology evidence="1">Multi-pass membrane protein</topology>
    </subcellularLocation>
</comment>
<comment type="similarity">
    <text evidence="1">Belongs to the ATPase C chain family.</text>
</comment>
<keyword id="KW-0066">ATP synthesis</keyword>
<keyword id="KW-0997">Cell inner membrane</keyword>
<keyword id="KW-1003">Cell membrane</keyword>
<keyword id="KW-0138">CF(0)</keyword>
<keyword id="KW-0375">Hydrogen ion transport</keyword>
<keyword id="KW-0406">Ion transport</keyword>
<keyword id="KW-0446">Lipid-binding</keyword>
<keyword id="KW-0472">Membrane</keyword>
<keyword id="KW-1185">Reference proteome</keyword>
<keyword id="KW-0812">Transmembrane</keyword>
<keyword id="KW-1133">Transmembrane helix</keyword>
<keyword id="KW-0813">Transport</keyword>
<name>ATPL_VEREI</name>
<protein>
    <recommendedName>
        <fullName evidence="1">ATP synthase subunit c</fullName>
    </recommendedName>
    <alternativeName>
        <fullName evidence="1">ATP synthase F(0) sector subunit c</fullName>
    </alternativeName>
    <alternativeName>
        <fullName evidence="1">F-type ATPase subunit c</fullName>
        <shortName evidence="1">F-ATPase subunit c</shortName>
    </alternativeName>
    <alternativeName>
        <fullName evidence="1">Lipid-binding protein</fullName>
    </alternativeName>
</protein>
<accession>A1WF53</accession>
<organism>
    <name type="scientific">Verminephrobacter eiseniae (strain EF01-2)</name>
    <dbReference type="NCBI Taxonomy" id="391735"/>
    <lineage>
        <taxon>Bacteria</taxon>
        <taxon>Pseudomonadati</taxon>
        <taxon>Pseudomonadota</taxon>
        <taxon>Betaproteobacteria</taxon>
        <taxon>Burkholderiales</taxon>
        <taxon>Comamonadaceae</taxon>
        <taxon>Verminephrobacter</taxon>
    </lineage>
</organism>